<dbReference type="EMBL" id="AK043692">
    <property type="protein sequence ID" value="BAC31619.1"/>
    <property type="molecule type" value="mRNA"/>
</dbReference>
<dbReference type="EMBL" id="BC043087">
    <property type="protein sequence ID" value="AAH43087.1"/>
    <property type="molecule type" value="mRNA"/>
</dbReference>
<dbReference type="EMBL" id="BC063081">
    <property type="protein sequence ID" value="AAH63081.1"/>
    <property type="molecule type" value="mRNA"/>
</dbReference>
<dbReference type="CCDS" id="CCDS23461.1"/>
<dbReference type="RefSeq" id="NP_082995.1">
    <property type="nucleotide sequence ID" value="NM_028719.3"/>
</dbReference>
<dbReference type="RefSeq" id="XP_036011238.1">
    <property type="nucleotide sequence ID" value="XM_036155345.1"/>
</dbReference>
<dbReference type="SMR" id="Q8BLR2"/>
<dbReference type="BioGRID" id="216429">
    <property type="interactions" value="10"/>
</dbReference>
<dbReference type="FunCoup" id="Q8BLR2">
    <property type="interactions" value="366"/>
</dbReference>
<dbReference type="IntAct" id="Q8BLR2">
    <property type="interactions" value="1"/>
</dbReference>
<dbReference type="STRING" id="10090.ENSMUSP00000049663"/>
<dbReference type="iPTMnet" id="Q8BLR2"/>
<dbReference type="PhosphoSitePlus" id="Q8BLR2"/>
<dbReference type="jPOST" id="Q8BLR2"/>
<dbReference type="PaxDb" id="10090-ENSMUSP00000049663"/>
<dbReference type="PeptideAtlas" id="Q8BLR2"/>
<dbReference type="ProteomicsDB" id="283937"/>
<dbReference type="Antibodypedia" id="33351">
    <property type="antibodies" value="83 antibodies from 19 providers"/>
</dbReference>
<dbReference type="DNASU" id="74020"/>
<dbReference type="Ensembl" id="ENSMUST00000057742.15">
    <property type="protein sequence ID" value="ENSMUSP00000049663.9"/>
    <property type="gene ID" value="ENSMUSG00000032564.17"/>
</dbReference>
<dbReference type="GeneID" id="74020"/>
<dbReference type="KEGG" id="mmu:74020"/>
<dbReference type="UCSC" id="uc009rhr.1">
    <property type="organism name" value="mouse"/>
</dbReference>
<dbReference type="AGR" id="MGI:1921270"/>
<dbReference type="CTD" id="131034"/>
<dbReference type="MGI" id="MGI:1921270">
    <property type="gene designation" value="Cpne4"/>
</dbReference>
<dbReference type="VEuPathDB" id="HostDB:ENSMUSG00000032564"/>
<dbReference type="eggNOG" id="KOG1327">
    <property type="taxonomic scope" value="Eukaryota"/>
</dbReference>
<dbReference type="GeneTree" id="ENSGT00940000155519"/>
<dbReference type="HOGENOM" id="CLU_020452_4_0_1"/>
<dbReference type="InParanoid" id="Q8BLR2"/>
<dbReference type="OMA" id="XVIAEEL"/>
<dbReference type="OrthoDB" id="5855668at2759"/>
<dbReference type="PhylomeDB" id="Q8BLR2"/>
<dbReference type="TreeFam" id="TF316419"/>
<dbReference type="BioGRID-ORCS" id="74020">
    <property type="hits" value="2 hits in 78 CRISPR screens"/>
</dbReference>
<dbReference type="ChiTaRS" id="Cpne4">
    <property type="organism name" value="mouse"/>
</dbReference>
<dbReference type="PRO" id="PR:Q8BLR2"/>
<dbReference type="Proteomes" id="UP000000589">
    <property type="component" value="Chromosome 9"/>
</dbReference>
<dbReference type="RNAct" id="Q8BLR2">
    <property type="molecule type" value="protein"/>
</dbReference>
<dbReference type="Bgee" id="ENSMUSG00000032564">
    <property type="expression patterns" value="Expressed in dentate gyrus of hippocampal formation granule cell and 91 other cell types or tissues"/>
</dbReference>
<dbReference type="ExpressionAtlas" id="Q8BLR2">
    <property type="expression patterns" value="baseline and differential"/>
</dbReference>
<dbReference type="GO" id="GO:0098978">
    <property type="term" value="C:glutamatergic synapse"/>
    <property type="evidence" value="ECO:0000314"/>
    <property type="project" value="SynGO"/>
</dbReference>
<dbReference type="GO" id="GO:0045202">
    <property type="term" value="C:synapse"/>
    <property type="evidence" value="ECO:0000314"/>
    <property type="project" value="SynGO"/>
</dbReference>
<dbReference type="GO" id="GO:0005544">
    <property type="term" value="F:calcium-dependent phospholipid binding"/>
    <property type="evidence" value="ECO:0007669"/>
    <property type="project" value="InterPro"/>
</dbReference>
<dbReference type="GO" id="GO:0046872">
    <property type="term" value="F:metal ion binding"/>
    <property type="evidence" value="ECO:0007669"/>
    <property type="project" value="UniProtKB-KW"/>
</dbReference>
<dbReference type="CDD" id="cd04048">
    <property type="entry name" value="C2A_Copine"/>
    <property type="match status" value="1"/>
</dbReference>
<dbReference type="CDD" id="cd04047">
    <property type="entry name" value="C2B_Copine"/>
    <property type="match status" value="1"/>
</dbReference>
<dbReference type="CDD" id="cd01459">
    <property type="entry name" value="vWA_copine_like"/>
    <property type="match status" value="1"/>
</dbReference>
<dbReference type="FunFam" id="2.60.40.150:FF:000063">
    <property type="entry name" value="Copine 4"/>
    <property type="match status" value="1"/>
</dbReference>
<dbReference type="FunFam" id="2.60.40.150:FF:000083">
    <property type="entry name" value="Copine 4"/>
    <property type="match status" value="1"/>
</dbReference>
<dbReference type="FunFam" id="3.40.50.410:FF:000042">
    <property type="entry name" value="Copine 4"/>
    <property type="match status" value="1"/>
</dbReference>
<dbReference type="Gene3D" id="2.60.40.150">
    <property type="entry name" value="C2 domain"/>
    <property type="match status" value="2"/>
</dbReference>
<dbReference type="Gene3D" id="3.40.50.410">
    <property type="entry name" value="von Willebrand factor, type A domain"/>
    <property type="match status" value="1"/>
</dbReference>
<dbReference type="InterPro" id="IPR000008">
    <property type="entry name" value="C2_dom"/>
</dbReference>
<dbReference type="InterPro" id="IPR035892">
    <property type="entry name" value="C2_domain_sf"/>
</dbReference>
<dbReference type="InterPro" id="IPR037768">
    <property type="entry name" value="C2B_Copine"/>
</dbReference>
<dbReference type="InterPro" id="IPR045052">
    <property type="entry name" value="Copine"/>
</dbReference>
<dbReference type="InterPro" id="IPR010734">
    <property type="entry name" value="Copine_C"/>
</dbReference>
<dbReference type="InterPro" id="IPR002035">
    <property type="entry name" value="VWF_A"/>
</dbReference>
<dbReference type="InterPro" id="IPR036465">
    <property type="entry name" value="vWFA_dom_sf"/>
</dbReference>
<dbReference type="PANTHER" id="PTHR10857">
    <property type="entry name" value="COPINE"/>
    <property type="match status" value="1"/>
</dbReference>
<dbReference type="PANTHER" id="PTHR10857:SF4">
    <property type="entry name" value="COPINE-4"/>
    <property type="match status" value="1"/>
</dbReference>
<dbReference type="Pfam" id="PF00168">
    <property type="entry name" value="C2"/>
    <property type="match status" value="2"/>
</dbReference>
<dbReference type="Pfam" id="PF07002">
    <property type="entry name" value="Copine"/>
    <property type="match status" value="1"/>
</dbReference>
<dbReference type="SMART" id="SM00239">
    <property type="entry name" value="C2"/>
    <property type="match status" value="2"/>
</dbReference>
<dbReference type="SMART" id="SM00327">
    <property type="entry name" value="VWA"/>
    <property type="match status" value="1"/>
</dbReference>
<dbReference type="SUPFAM" id="SSF49562">
    <property type="entry name" value="C2 domain (Calcium/lipid-binding domain, CaLB)"/>
    <property type="match status" value="2"/>
</dbReference>
<dbReference type="SUPFAM" id="SSF53300">
    <property type="entry name" value="vWA-like"/>
    <property type="match status" value="1"/>
</dbReference>
<dbReference type="PROSITE" id="PS50004">
    <property type="entry name" value="C2"/>
    <property type="match status" value="2"/>
</dbReference>
<reference key="1">
    <citation type="journal article" date="2005" name="Science">
        <title>The transcriptional landscape of the mammalian genome.</title>
        <authorList>
            <person name="Carninci P."/>
            <person name="Kasukawa T."/>
            <person name="Katayama S."/>
            <person name="Gough J."/>
            <person name="Frith M.C."/>
            <person name="Maeda N."/>
            <person name="Oyama R."/>
            <person name="Ravasi T."/>
            <person name="Lenhard B."/>
            <person name="Wells C."/>
            <person name="Kodzius R."/>
            <person name="Shimokawa K."/>
            <person name="Bajic V.B."/>
            <person name="Brenner S.E."/>
            <person name="Batalov S."/>
            <person name="Forrest A.R."/>
            <person name="Zavolan M."/>
            <person name="Davis M.J."/>
            <person name="Wilming L.G."/>
            <person name="Aidinis V."/>
            <person name="Allen J.E."/>
            <person name="Ambesi-Impiombato A."/>
            <person name="Apweiler R."/>
            <person name="Aturaliya R.N."/>
            <person name="Bailey T.L."/>
            <person name="Bansal M."/>
            <person name="Baxter L."/>
            <person name="Beisel K.W."/>
            <person name="Bersano T."/>
            <person name="Bono H."/>
            <person name="Chalk A.M."/>
            <person name="Chiu K.P."/>
            <person name="Choudhary V."/>
            <person name="Christoffels A."/>
            <person name="Clutterbuck D.R."/>
            <person name="Crowe M.L."/>
            <person name="Dalla E."/>
            <person name="Dalrymple B.P."/>
            <person name="de Bono B."/>
            <person name="Della Gatta G."/>
            <person name="di Bernardo D."/>
            <person name="Down T."/>
            <person name="Engstrom P."/>
            <person name="Fagiolini M."/>
            <person name="Faulkner G."/>
            <person name="Fletcher C.F."/>
            <person name="Fukushima T."/>
            <person name="Furuno M."/>
            <person name="Futaki S."/>
            <person name="Gariboldi M."/>
            <person name="Georgii-Hemming P."/>
            <person name="Gingeras T.R."/>
            <person name="Gojobori T."/>
            <person name="Green R.E."/>
            <person name="Gustincich S."/>
            <person name="Harbers M."/>
            <person name="Hayashi Y."/>
            <person name="Hensch T.K."/>
            <person name="Hirokawa N."/>
            <person name="Hill D."/>
            <person name="Huminiecki L."/>
            <person name="Iacono M."/>
            <person name="Ikeo K."/>
            <person name="Iwama A."/>
            <person name="Ishikawa T."/>
            <person name="Jakt M."/>
            <person name="Kanapin A."/>
            <person name="Katoh M."/>
            <person name="Kawasawa Y."/>
            <person name="Kelso J."/>
            <person name="Kitamura H."/>
            <person name="Kitano H."/>
            <person name="Kollias G."/>
            <person name="Krishnan S.P."/>
            <person name="Kruger A."/>
            <person name="Kummerfeld S.K."/>
            <person name="Kurochkin I.V."/>
            <person name="Lareau L.F."/>
            <person name="Lazarevic D."/>
            <person name="Lipovich L."/>
            <person name="Liu J."/>
            <person name="Liuni S."/>
            <person name="McWilliam S."/>
            <person name="Madan Babu M."/>
            <person name="Madera M."/>
            <person name="Marchionni L."/>
            <person name="Matsuda H."/>
            <person name="Matsuzawa S."/>
            <person name="Miki H."/>
            <person name="Mignone F."/>
            <person name="Miyake S."/>
            <person name="Morris K."/>
            <person name="Mottagui-Tabar S."/>
            <person name="Mulder N."/>
            <person name="Nakano N."/>
            <person name="Nakauchi H."/>
            <person name="Ng P."/>
            <person name="Nilsson R."/>
            <person name="Nishiguchi S."/>
            <person name="Nishikawa S."/>
            <person name="Nori F."/>
            <person name="Ohara O."/>
            <person name="Okazaki Y."/>
            <person name="Orlando V."/>
            <person name="Pang K.C."/>
            <person name="Pavan W.J."/>
            <person name="Pavesi G."/>
            <person name="Pesole G."/>
            <person name="Petrovsky N."/>
            <person name="Piazza S."/>
            <person name="Reed J."/>
            <person name="Reid J.F."/>
            <person name="Ring B.Z."/>
            <person name="Ringwald M."/>
            <person name="Rost B."/>
            <person name="Ruan Y."/>
            <person name="Salzberg S.L."/>
            <person name="Sandelin A."/>
            <person name="Schneider C."/>
            <person name="Schoenbach C."/>
            <person name="Sekiguchi K."/>
            <person name="Semple C.A."/>
            <person name="Seno S."/>
            <person name="Sessa L."/>
            <person name="Sheng Y."/>
            <person name="Shibata Y."/>
            <person name="Shimada H."/>
            <person name="Shimada K."/>
            <person name="Silva D."/>
            <person name="Sinclair B."/>
            <person name="Sperling S."/>
            <person name="Stupka E."/>
            <person name="Sugiura K."/>
            <person name="Sultana R."/>
            <person name="Takenaka Y."/>
            <person name="Taki K."/>
            <person name="Tammoja K."/>
            <person name="Tan S.L."/>
            <person name="Tang S."/>
            <person name="Taylor M.S."/>
            <person name="Tegner J."/>
            <person name="Teichmann S.A."/>
            <person name="Ueda H.R."/>
            <person name="van Nimwegen E."/>
            <person name="Verardo R."/>
            <person name="Wei C.L."/>
            <person name="Yagi K."/>
            <person name="Yamanishi H."/>
            <person name="Zabarovsky E."/>
            <person name="Zhu S."/>
            <person name="Zimmer A."/>
            <person name="Hide W."/>
            <person name="Bult C."/>
            <person name="Grimmond S.M."/>
            <person name="Teasdale R.D."/>
            <person name="Liu E.T."/>
            <person name="Brusic V."/>
            <person name="Quackenbush J."/>
            <person name="Wahlestedt C."/>
            <person name="Mattick J.S."/>
            <person name="Hume D.A."/>
            <person name="Kai C."/>
            <person name="Sasaki D."/>
            <person name="Tomaru Y."/>
            <person name="Fukuda S."/>
            <person name="Kanamori-Katayama M."/>
            <person name="Suzuki M."/>
            <person name="Aoki J."/>
            <person name="Arakawa T."/>
            <person name="Iida J."/>
            <person name="Imamura K."/>
            <person name="Itoh M."/>
            <person name="Kato T."/>
            <person name="Kawaji H."/>
            <person name="Kawagashira N."/>
            <person name="Kawashima T."/>
            <person name="Kojima M."/>
            <person name="Kondo S."/>
            <person name="Konno H."/>
            <person name="Nakano K."/>
            <person name="Ninomiya N."/>
            <person name="Nishio T."/>
            <person name="Okada M."/>
            <person name="Plessy C."/>
            <person name="Shibata K."/>
            <person name="Shiraki T."/>
            <person name="Suzuki S."/>
            <person name="Tagami M."/>
            <person name="Waki K."/>
            <person name="Watahiki A."/>
            <person name="Okamura-Oho Y."/>
            <person name="Suzuki H."/>
            <person name="Kawai J."/>
            <person name="Hayashizaki Y."/>
        </authorList>
    </citation>
    <scope>NUCLEOTIDE SEQUENCE [LARGE SCALE MRNA]</scope>
    <source>
        <strain>C57BL/6J</strain>
        <tissue>Brain cortex</tissue>
    </source>
</reference>
<reference key="2">
    <citation type="journal article" date="2004" name="Genome Res.">
        <title>The status, quality, and expansion of the NIH full-length cDNA project: the Mammalian Gene Collection (MGC).</title>
        <authorList>
            <consortium name="The MGC Project Team"/>
        </authorList>
    </citation>
    <scope>NUCLEOTIDE SEQUENCE [LARGE SCALE MRNA]</scope>
    <source>
        <strain>C57BL/6J</strain>
        <tissue>Brain</tissue>
    </source>
</reference>
<reference key="3">
    <citation type="journal article" date="2010" name="Cell">
        <title>A tissue-specific atlas of mouse protein phosphorylation and expression.</title>
        <authorList>
            <person name="Huttlin E.L."/>
            <person name="Jedrychowski M.P."/>
            <person name="Elias J.E."/>
            <person name="Goswami T."/>
            <person name="Rad R."/>
            <person name="Beausoleil S.A."/>
            <person name="Villen J."/>
            <person name="Haas W."/>
            <person name="Sowa M.E."/>
            <person name="Gygi S.P."/>
        </authorList>
    </citation>
    <scope>IDENTIFICATION BY MASS SPECTROMETRY [LARGE SCALE ANALYSIS]</scope>
    <source>
        <tissue>Brain</tissue>
    </source>
</reference>
<gene>
    <name evidence="6" type="primary">Cpne4</name>
</gene>
<organism>
    <name type="scientific">Mus musculus</name>
    <name type="common">Mouse</name>
    <dbReference type="NCBI Taxonomy" id="10090"/>
    <lineage>
        <taxon>Eukaryota</taxon>
        <taxon>Metazoa</taxon>
        <taxon>Chordata</taxon>
        <taxon>Craniata</taxon>
        <taxon>Vertebrata</taxon>
        <taxon>Euteleostomi</taxon>
        <taxon>Mammalia</taxon>
        <taxon>Eutheria</taxon>
        <taxon>Euarchontoglires</taxon>
        <taxon>Glires</taxon>
        <taxon>Rodentia</taxon>
        <taxon>Myomorpha</taxon>
        <taxon>Muroidea</taxon>
        <taxon>Muridae</taxon>
        <taxon>Murinae</taxon>
        <taxon>Mus</taxon>
        <taxon>Mus</taxon>
    </lineage>
</organism>
<name>CPNE4_MOUSE</name>
<evidence type="ECO:0000250" key="1">
    <source>
        <dbReference type="UniProtKB" id="Q96A23"/>
    </source>
</evidence>
<evidence type="ECO:0000250" key="2">
    <source>
        <dbReference type="UniProtKB" id="Q99829"/>
    </source>
</evidence>
<evidence type="ECO:0000255" key="3">
    <source>
        <dbReference type="PROSITE-ProRule" id="PRU00041"/>
    </source>
</evidence>
<evidence type="ECO:0000255" key="4">
    <source>
        <dbReference type="PROSITE-ProRule" id="PRU00219"/>
    </source>
</evidence>
<evidence type="ECO:0000305" key="5"/>
<evidence type="ECO:0000312" key="6">
    <source>
        <dbReference type="MGI" id="MGI:1921270"/>
    </source>
</evidence>
<sequence>MKKMSNIYESAANTLGIFNSPCLTKVELRVACKGISDRDALSKPDPCVILKMQSHGQWFEVDRTEVIRTCINPVYSKLFTVDFYFEEVQRLRFEVHDISSNHNGLKEADFLGGMECTLGQIVSQRKLSKSLLKHGNTAGKSSITVIAEELSGNDDYVELAFNARKLDDKDFFSKSDPFLEIFRMNDDATQQLVHRTEVVMNNLSPAWKSFKVSVNSLCSGDPDRRLKCIVWDWDSNGKHDFIGEFTSTFKEMRGAMEGKQVQWECINPKYKAKKKNYKNSGMVILNQCKIHKMHSFLDYIMGGCQIQFTVAIDFTASNGDPRNSCSLHYIHPYQPNEYLKALVAVGEICQDYDSDKMFPAFGFGARIPPEYTVSHDFAINFNEDNPECAGIQGVVEAYQSCLPKLQLYGPTNIAPIIQKVAKSASEETNTKEASQYFILLILTDGVITDMADTREAIVHASHLPMSVIIVGVGNADFSDMQMLDGDDGILRSPKGEPVLRDIVQFVPFRNFKHASPAALAKSVLAEVPNQVVDYYNGKGIKPKCSSEVYESSRTLAP</sequence>
<accession>Q8BLR2</accession>
<keyword id="KW-0106">Calcium</keyword>
<keyword id="KW-0479">Metal-binding</keyword>
<keyword id="KW-1185">Reference proteome</keyword>
<keyword id="KW-0677">Repeat</keyword>
<feature type="chain" id="PRO_0000144842" description="Copine-4">
    <location>
        <begin position="1"/>
        <end position="557"/>
    </location>
</feature>
<feature type="domain" description="C2 1" evidence="3">
    <location>
        <begin position="3"/>
        <end position="131"/>
    </location>
</feature>
<feature type="domain" description="C2 2" evidence="3">
    <location>
        <begin position="137"/>
        <end position="264"/>
    </location>
</feature>
<feature type="domain" description="VWFA" evidence="4">
    <location>
        <begin position="305"/>
        <end position="507"/>
    </location>
</feature>
<feature type="binding site" evidence="3">
    <location>
        <position position="170"/>
    </location>
    <ligand>
        <name>Ca(2+)</name>
        <dbReference type="ChEBI" id="CHEBI:29108"/>
        <label>1</label>
    </ligand>
</feature>
<feature type="binding site" evidence="3">
    <location>
        <position position="170"/>
    </location>
    <ligand>
        <name>Ca(2+)</name>
        <dbReference type="ChEBI" id="CHEBI:29108"/>
        <label>2</label>
    </ligand>
</feature>
<feature type="binding site" evidence="3">
    <location>
        <position position="176"/>
    </location>
    <ligand>
        <name>Ca(2+)</name>
        <dbReference type="ChEBI" id="CHEBI:29108"/>
        <label>1</label>
    </ligand>
</feature>
<feature type="binding site" evidence="3">
    <location>
        <position position="232"/>
    </location>
    <ligand>
        <name>Ca(2+)</name>
        <dbReference type="ChEBI" id="CHEBI:29108"/>
        <label>1</label>
    </ligand>
</feature>
<feature type="binding site" evidence="3">
    <location>
        <position position="232"/>
    </location>
    <ligand>
        <name>Ca(2+)</name>
        <dbReference type="ChEBI" id="CHEBI:29108"/>
        <label>2</label>
    </ligand>
</feature>
<feature type="binding site" evidence="3">
    <location>
        <position position="234"/>
    </location>
    <ligand>
        <name>Ca(2+)</name>
        <dbReference type="ChEBI" id="CHEBI:29108"/>
        <label>1</label>
    </ligand>
</feature>
<feature type="binding site" evidence="3">
    <location>
        <position position="234"/>
    </location>
    <ligand>
        <name>Ca(2+)</name>
        <dbReference type="ChEBI" id="CHEBI:29108"/>
        <label>2</label>
    </ligand>
</feature>
<feature type="binding site" evidence="3">
    <location>
        <position position="240"/>
    </location>
    <ligand>
        <name>Ca(2+)</name>
        <dbReference type="ChEBI" id="CHEBI:29108"/>
        <label>2</label>
    </ligand>
</feature>
<proteinExistence type="evidence at protein level"/>
<protein>
    <recommendedName>
        <fullName evidence="5">Copine-4</fullName>
    </recommendedName>
    <alternativeName>
        <fullName evidence="2 6">Copine IV</fullName>
    </alternativeName>
</protein>
<comment type="function">
    <text evidence="2">Probable calcium-dependent phospholipid-binding protein that may play a role in calcium-mediated intracellular processes.</text>
</comment>
<comment type="cofactor">
    <cofactor evidence="3">
        <name>Ca(2+)</name>
        <dbReference type="ChEBI" id="CHEBI:29108"/>
    </cofactor>
</comment>
<comment type="subunit">
    <text evidence="1">Interacts (via VWFA domain) with ACTB, BCOR, BICD2, CCDC22, CDC42BPB, CEP162, MYCBP2, NONO, PDCD6, PITPNM2, RDX, SKIL, SKT, SPTBN1, UBE2O and WTAP.</text>
</comment>
<comment type="similarity">
    <text evidence="5">Belongs to the copine family.</text>
</comment>